<gene>
    <name type="ordered locus">Dshi_0610</name>
</gene>
<evidence type="ECO:0000255" key="1">
    <source>
        <dbReference type="HAMAP-Rule" id="MF_01830"/>
    </source>
</evidence>
<reference key="1">
    <citation type="journal article" date="2010" name="ISME J.">
        <title>The complete genome sequence of the algal symbiont Dinoroseobacter shibae: a hitchhiker's guide to life in the sea.</title>
        <authorList>
            <person name="Wagner-Dobler I."/>
            <person name="Ballhausen B."/>
            <person name="Berger M."/>
            <person name="Brinkhoff T."/>
            <person name="Buchholz I."/>
            <person name="Bunk B."/>
            <person name="Cypionka H."/>
            <person name="Daniel R."/>
            <person name="Drepper T."/>
            <person name="Gerdts G."/>
            <person name="Hahnke S."/>
            <person name="Han C."/>
            <person name="Jahn D."/>
            <person name="Kalhoefer D."/>
            <person name="Kiss H."/>
            <person name="Klenk H.P."/>
            <person name="Kyrpides N."/>
            <person name="Liebl W."/>
            <person name="Liesegang H."/>
            <person name="Meincke L."/>
            <person name="Pati A."/>
            <person name="Petersen J."/>
            <person name="Piekarski T."/>
            <person name="Pommerenke C."/>
            <person name="Pradella S."/>
            <person name="Pukall R."/>
            <person name="Rabus R."/>
            <person name="Stackebrandt E."/>
            <person name="Thole S."/>
            <person name="Thompson L."/>
            <person name="Tielen P."/>
            <person name="Tomasch J."/>
            <person name="von Jan M."/>
            <person name="Wanphrut N."/>
            <person name="Wichels A."/>
            <person name="Zech H."/>
            <person name="Simon M."/>
        </authorList>
    </citation>
    <scope>NUCLEOTIDE SEQUENCE [LARGE SCALE GENOMIC DNA]</scope>
    <source>
        <strain>DSM 16493 / NCIMB 14021 / DFL 12</strain>
    </source>
</reference>
<feature type="chain" id="PRO_0000379838" description="Putative hydro-lyase Dshi_0610">
    <location>
        <begin position="1"/>
        <end position="260"/>
    </location>
</feature>
<protein>
    <recommendedName>
        <fullName evidence="1">Putative hydro-lyase Dshi_0610</fullName>
        <ecNumber evidence="1">4.2.1.-</ecNumber>
    </recommendedName>
</protein>
<comment type="similarity">
    <text evidence="1">Belongs to the D-glutamate cyclase family.</text>
</comment>
<proteinExistence type="inferred from homology"/>
<accession>A8LPN3</accession>
<keyword id="KW-0456">Lyase</keyword>
<keyword id="KW-1185">Reference proteome</keyword>
<sequence length="260" mass="28053">MHSSVPAEIRSGQHQGHTAGLAPGCLQVNLVVLPASHAQAFGEYCALNPRPCPLILLTTPGQTDWTELGTGLDVRRDVPAYNIYENGVLSRTVPDLLNDWSDDLVTFALGFSFTFEHALLRAGIPVRNIATNTTVPMYQTNRETRSAGPFAGPLVVSMRPIPAAKVAKAHDISAQFPWARGAPIHSGDPKVLGIEDLDQPDWGDTSETRDGGVPVFWACGVTPQAALEEAELSLCITHRPGHMLVTDLPEHDPFRAGNLQ</sequence>
<name>Y610_DINSH</name>
<dbReference type="EC" id="4.2.1.-" evidence="1"/>
<dbReference type="EMBL" id="CP000830">
    <property type="protein sequence ID" value="ABV92356.1"/>
    <property type="molecule type" value="Genomic_DNA"/>
</dbReference>
<dbReference type="RefSeq" id="WP_012177288.1">
    <property type="nucleotide sequence ID" value="NC_009952.1"/>
</dbReference>
<dbReference type="SMR" id="A8LPN3"/>
<dbReference type="STRING" id="398580.Dshi_0610"/>
<dbReference type="KEGG" id="dsh:Dshi_0610"/>
<dbReference type="eggNOG" id="COG4336">
    <property type="taxonomic scope" value="Bacteria"/>
</dbReference>
<dbReference type="HOGENOM" id="CLU_059759_0_0_5"/>
<dbReference type="OrthoDB" id="149585at2"/>
<dbReference type="Proteomes" id="UP000006833">
    <property type="component" value="Chromosome"/>
</dbReference>
<dbReference type="GO" id="GO:0047820">
    <property type="term" value="F:D-glutamate cyclase activity"/>
    <property type="evidence" value="ECO:0007669"/>
    <property type="project" value="TreeGrafter"/>
</dbReference>
<dbReference type="GO" id="GO:0006536">
    <property type="term" value="P:glutamate metabolic process"/>
    <property type="evidence" value="ECO:0007669"/>
    <property type="project" value="TreeGrafter"/>
</dbReference>
<dbReference type="FunFam" id="3.30.2040.10:FF:000001">
    <property type="entry name" value="D-glutamate cyclase, mitochondrial"/>
    <property type="match status" value="1"/>
</dbReference>
<dbReference type="Gene3D" id="3.40.1640.10">
    <property type="entry name" value="PSTPO5379-like"/>
    <property type="match status" value="1"/>
</dbReference>
<dbReference type="Gene3D" id="3.30.2040.10">
    <property type="entry name" value="PSTPO5379-like domain"/>
    <property type="match status" value="1"/>
</dbReference>
<dbReference type="HAMAP" id="MF_01830">
    <property type="entry name" value="Hydro_lyase"/>
    <property type="match status" value="1"/>
</dbReference>
<dbReference type="InterPro" id="IPR009906">
    <property type="entry name" value="D-Glu_cyclase"/>
</dbReference>
<dbReference type="InterPro" id="IPR038021">
    <property type="entry name" value="Putative_hydro-lyase"/>
</dbReference>
<dbReference type="InterPro" id="IPR016938">
    <property type="entry name" value="UPF0317"/>
</dbReference>
<dbReference type="NCBIfam" id="NF003969">
    <property type="entry name" value="PRK05463.1"/>
    <property type="match status" value="1"/>
</dbReference>
<dbReference type="PANTHER" id="PTHR32022">
    <property type="entry name" value="D-GLUTAMATE CYCLASE, MITOCHONDRIAL"/>
    <property type="match status" value="1"/>
</dbReference>
<dbReference type="PANTHER" id="PTHR32022:SF10">
    <property type="entry name" value="D-GLUTAMATE CYCLASE, MITOCHONDRIAL"/>
    <property type="match status" value="1"/>
</dbReference>
<dbReference type="Pfam" id="PF07286">
    <property type="entry name" value="D-Glu_cyclase"/>
    <property type="match status" value="1"/>
</dbReference>
<dbReference type="PIRSF" id="PIRSF029755">
    <property type="entry name" value="UCP029755"/>
    <property type="match status" value="1"/>
</dbReference>
<dbReference type="SUPFAM" id="SSF160920">
    <property type="entry name" value="PSTPO5379-like"/>
    <property type="match status" value="1"/>
</dbReference>
<organism>
    <name type="scientific">Dinoroseobacter shibae (strain DSM 16493 / NCIMB 14021 / DFL 12)</name>
    <dbReference type="NCBI Taxonomy" id="398580"/>
    <lineage>
        <taxon>Bacteria</taxon>
        <taxon>Pseudomonadati</taxon>
        <taxon>Pseudomonadota</taxon>
        <taxon>Alphaproteobacteria</taxon>
        <taxon>Rhodobacterales</taxon>
        <taxon>Roseobacteraceae</taxon>
        <taxon>Dinoroseobacter</taxon>
    </lineage>
</organism>